<evidence type="ECO:0000250" key="1">
    <source>
        <dbReference type="UniProtKB" id="P9WI99"/>
    </source>
</evidence>
<evidence type="ECO:0000250" key="2">
    <source>
        <dbReference type="UniProtKB" id="Q9H479"/>
    </source>
</evidence>
<evidence type="ECO:0000250" key="3">
    <source>
        <dbReference type="UniProtKB" id="Q9HA64"/>
    </source>
</evidence>
<evidence type="ECO:0000305" key="4"/>
<dbReference type="EC" id="2.7.1.-" evidence="2"/>
<dbReference type="EMBL" id="AE003852">
    <property type="protein sequence ID" value="AAF94693.1"/>
    <property type="molecule type" value="Genomic_DNA"/>
</dbReference>
<dbReference type="PIR" id="G82186">
    <property type="entry name" value="G82186"/>
</dbReference>
<dbReference type="RefSeq" id="NP_231179.1">
    <property type="nucleotide sequence ID" value="NC_002505.1"/>
</dbReference>
<dbReference type="RefSeq" id="WP_000267456.1">
    <property type="nucleotide sequence ID" value="NZ_LT906614.1"/>
</dbReference>
<dbReference type="SMR" id="Q9KRU5"/>
<dbReference type="STRING" id="243277.VC_1539"/>
<dbReference type="DNASU" id="2613918"/>
<dbReference type="EnsemblBacteria" id="AAF94693">
    <property type="protein sequence ID" value="AAF94693"/>
    <property type="gene ID" value="VC_1539"/>
</dbReference>
<dbReference type="KEGG" id="vch:VC_1539"/>
<dbReference type="PATRIC" id="fig|243277.26.peg.1467"/>
<dbReference type="eggNOG" id="COG3001">
    <property type="taxonomic scope" value="Bacteria"/>
</dbReference>
<dbReference type="HOGENOM" id="CLU_036517_0_0_6"/>
<dbReference type="Proteomes" id="UP000000584">
    <property type="component" value="Chromosome 1"/>
</dbReference>
<dbReference type="GO" id="GO:0005524">
    <property type="term" value="F:ATP binding"/>
    <property type="evidence" value="ECO:0007669"/>
    <property type="project" value="UniProtKB-KW"/>
</dbReference>
<dbReference type="GO" id="GO:0016301">
    <property type="term" value="F:kinase activity"/>
    <property type="evidence" value="ECO:0007669"/>
    <property type="project" value="UniProtKB-KW"/>
</dbReference>
<dbReference type="Gene3D" id="3.90.1200.10">
    <property type="match status" value="1"/>
</dbReference>
<dbReference type="Gene3D" id="3.30.200.20">
    <property type="entry name" value="Phosphorylase Kinase, domain 1"/>
    <property type="match status" value="1"/>
</dbReference>
<dbReference type="InterPro" id="IPR016477">
    <property type="entry name" value="Fructo-/Ketosamine-3-kinase"/>
</dbReference>
<dbReference type="InterPro" id="IPR011009">
    <property type="entry name" value="Kinase-like_dom_sf"/>
</dbReference>
<dbReference type="PANTHER" id="PTHR12149">
    <property type="entry name" value="FRUCTOSAMINE 3 KINASE-RELATED PROTEIN"/>
    <property type="match status" value="1"/>
</dbReference>
<dbReference type="PANTHER" id="PTHR12149:SF8">
    <property type="entry name" value="PROTEIN-RIBULOSAMINE 3-KINASE"/>
    <property type="match status" value="1"/>
</dbReference>
<dbReference type="Pfam" id="PF03881">
    <property type="entry name" value="Fructosamin_kin"/>
    <property type="match status" value="1"/>
</dbReference>
<dbReference type="PIRSF" id="PIRSF006221">
    <property type="entry name" value="Ketosamine-3-kinase"/>
    <property type="match status" value="1"/>
</dbReference>
<dbReference type="SUPFAM" id="SSF56112">
    <property type="entry name" value="Protein kinase-like (PK-like)"/>
    <property type="match status" value="1"/>
</dbReference>
<proteinExistence type="inferred from homology"/>
<feature type="chain" id="PRO_0000216348" description="Probable ketoamine kinase VC_1539">
    <location>
        <begin position="1"/>
        <end position="288"/>
    </location>
</feature>
<feature type="active site" description="Proton acceptor" evidence="1">
    <location>
        <position position="195"/>
    </location>
</feature>
<feature type="binding site" evidence="3">
    <location>
        <begin position="92"/>
        <end position="94"/>
    </location>
    <ligand>
        <name>ATP</name>
        <dbReference type="ChEBI" id="CHEBI:30616"/>
    </ligand>
</feature>
<reference key="1">
    <citation type="journal article" date="2000" name="Nature">
        <title>DNA sequence of both chromosomes of the cholera pathogen Vibrio cholerae.</title>
        <authorList>
            <person name="Heidelberg J.F."/>
            <person name="Eisen J.A."/>
            <person name="Nelson W.C."/>
            <person name="Clayton R.A."/>
            <person name="Gwinn M.L."/>
            <person name="Dodson R.J."/>
            <person name="Haft D.H."/>
            <person name="Hickey E.K."/>
            <person name="Peterson J.D."/>
            <person name="Umayam L.A."/>
            <person name="Gill S.R."/>
            <person name="Nelson K.E."/>
            <person name="Read T.D."/>
            <person name="Tettelin H."/>
            <person name="Richardson D.L."/>
            <person name="Ermolaeva M.D."/>
            <person name="Vamathevan J.J."/>
            <person name="Bass S."/>
            <person name="Qin H."/>
            <person name="Dragoi I."/>
            <person name="Sellers P."/>
            <person name="McDonald L.A."/>
            <person name="Utterback T.R."/>
            <person name="Fleischmann R.D."/>
            <person name="Nierman W.C."/>
            <person name="White O."/>
            <person name="Salzberg S.L."/>
            <person name="Smith H.O."/>
            <person name="Colwell R.R."/>
            <person name="Mekalanos J.J."/>
            <person name="Venter J.C."/>
            <person name="Fraser C.M."/>
        </authorList>
    </citation>
    <scope>NUCLEOTIDE SEQUENCE [LARGE SCALE GENOMIC DNA]</scope>
    <source>
        <strain>ATCC 39315 / El Tor Inaba N16961</strain>
    </source>
</reference>
<name>KT3K_VIBCH</name>
<comment type="function">
    <text evidence="2">Ketoamine kinase that phosphorylates ketoamines on the third carbon of the sugar moiety to generate ketoamine 3-phosphate.</text>
</comment>
<comment type="similarity">
    <text evidence="4">Belongs to the fructosamine kinase family.</text>
</comment>
<sequence length="288" mass="33770">MWPAIIQQLSEQLGKDFHLVEKEKVHGGDINECFMVSDGIDRYFVKTNQREYLTKFTAEVENLRVMRESNTVQVPEYILHGTSKTHAYLVLNYLATKPLDDAERSYEFGVQLANLHRWGEQKEFGFDIDNYIGATVQPNPWHKKWALFFAEQRIGWQLQLMQEKGVNLTNINEFVEMVKTRLANHSPRPSLLHGDLWFGNVANIVNGPLCFDPACYWGDRECDIALAEWFGGFQPEFFQGYESVWPLDWGYEERKDIYNLYHVLNHYNQFGGHYLDEAQKLIEKILSY</sequence>
<organism>
    <name type="scientific">Vibrio cholerae serotype O1 (strain ATCC 39315 / El Tor Inaba N16961)</name>
    <dbReference type="NCBI Taxonomy" id="243277"/>
    <lineage>
        <taxon>Bacteria</taxon>
        <taxon>Pseudomonadati</taxon>
        <taxon>Pseudomonadota</taxon>
        <taxon>Gammaproteobacteria</taxon>
        <taxon>Vibrionales</taxon>
        <taxon>Vibrionaceae</taxon>
        <taxon>Vibrio</taxon>
    </lineage>
</organism>
<accession>Q9KRU5</accession>
<gene>
    <name type="ordered locus">VC_1539</name>
</gene>
<protein>
    <recommendedName>
        <fullName>Probable ketoamine kinase VC_1539</fullName>
        <ecNumber evidence="2">2.7.1.-</ecNumber>
    </recommendedName>
</protein>
<keyword id="KW-0067">ATP-binding</keyword>
<keyword id="KW-0418">Kinase</keyword>
<keyword id="KW-0547">Nucleotide-binding</keyword>
<keyword id="KW-1185">Reference proteome</keyword>
<keyword id="KW-0808">Transferase</keyword>